<evidence type="ECO:0000255" key="1">
    <source>
        <dbReference type="HAMAP-Rule" id="MF_01321"/>
    </source>
</evidence>
<evidence type="ECO:0000256" key="2">
    <source>
        <dbReference type="SAM" id="MobiDB-lite"/>
    </source>
</evidence>
<reference key="1">
    <citation type="journal article" date="2001" name="Science">
        <title>Comparative genomics of Listeria species.</title>
        <authorList>
            <person name="Glaser P."/>
            <person name="Frangeul L."/>
            <person name="Buchrieser C."/>
            <person name="Rusniok C."/>
            <person name="Amend A."/>
            <person name="Baquero F."/>
            <person name="Berche P."/>
            <person name="Bloecker H."/>
            <person name="Brandt P."/>
            <person name="Chakraborty T."/>
            <person name="Charbit A."/>
            <person name="Chetouani F."/>
            <person name="Couve E."/>
            <person name="de Daruvar A."/>
            <person name="Dehoux P."/>
            <person name="Domann E."/>
            <person name="Dominguez-Bernal G."/>
            <person name="Duchaud E."/>
            <person name="Durant L."/>
            <person name="Dussurget O."/>
            <person name="Entian K.-D."/>
            <person name="Fsihi H."/>
            <person name="Garcia-del Portillo F."/>
            <person name="Garrido P."/>
            <person name="Gautier L."/>
            <person name="Goebel W."/>
            <person name="Gomez-Lopez N."/>
            <person name="Hain T."/>
            <person name="Hauf J."/>
            <person name="Jackson D."/>
            <person name="Jones L.-M."/>
            <person name="Kaerst U."/>
            <person name="Kreft J."/>
            <person name="Kuhn M."/>
            <person name="Kunst F."/>
            <person name="Kurapkat G."/>
            <person name="Madueno E."/>
            <person name="Maitournam A."/>
            <person name="Mata Vicente J."/>
            <person name="Ng E."/>
            <person name="Nedjari H."/>
            <person name="Nordsiek G."/>
            <person name="Novella S."/>
            <person name="de Pablos B."/>
            <person name="Perez-Diaz J.-C."/>
            <person name="Purcell R."/>
            <person name="Remmel B."/>
            <person name="Rose M."/>
            <person name="Schlueter T."/>
            <person name="Simoes N."/>
            <person name="Tierrez A."/>
            <person name="Vazquez-Boland J.-A."/>
            <person name="Voss H."/>
            <person name="Wehland J."/>
            <person name="Cossart P."/>
        </authorList>
    </citation>
    <scope>NUCLEOTIDE SEQUENCE [LARGE SCALE GENOMIC DNA]</scope>
    <source>
        <strain>ATCC BAA-680 / CLIP 11262</strain>
    </source>
</reference>
<gene>
    <name evidence="1" type="primary">rpoB</name>
    <name type="ordered locus">lin0285</name>
</gene>
<dbReference type="EC" id="2.7.7.6" evidence="1"/>
<dbReference type="EMBL" id="AL596164">
    <property type="protein sequence ID" value="CAC95518.1"/>
    <property type="molecule type" value="Genomic_DNA"/>
</dbReference>
<dbReference type="PIR" id="AF1468">
    <property type="entry name" value="AF1468"/>
</dbReference>
<dbReference type="RefSeq" id="WP_010990308.1">
    <property type="nucleotide sequence ID" value="NC_003212.1"/>
</dbReference>
<dbReference type="SMR" id="Q92F22"/>
<dbReference type="STRING" id="272626.gene:17564612"/>
<dbReference type="GeneID" id="93233735"/>
<dbReference type="KEGG" id="lin:rpoB"/>
<dbReference type="eggNOG" id="COG0085">
    <property type="taxonomic scope" value="Bacteria"/>
</dbReference>
<dbReference type="HOGENOM" id="CLU_000524_4_1_9"/>
<dbReference type="OrthoDB" id="9803954at2"/>
<dbReference type="Proteomes" id="UP000002513">
    <property type="component" value="Chromosome"/>
</dbReference>
<dbReference type="GO" id="GO:0000428">
    <property type="term" value="C:DNA-directed RNA polymerase complex"/>
    <property type="evidence" value="ECO:0007669"/>
    <property type="project" value="UniProtKB-KW"/>
</dbReference>
<dbReference type="GO" id="GO:0003677">
    <property type="term" value="F:DNA binding"/>
    <property type="evidence" value="ECO:0007669"/>
    <property type="project" value="UniProtKB-UniRule"/>
</dbReference>
<dbReference type="GO" id="GO:0003899">
    <property type="term" value="F:DNA-directed RNA polymerase activity"/>
    <property type="evidence" value="ECO:0007669"/>
    <property type="project" value="UniProtKB-UniRule"/>
</dbReference>
<dbReference type="GO" id="GO:0032549">
    <property type="term" value="F:ribonucleoside binding"/>
    <property type="evidence" value="ECO:0007669"/>
    <property type="project" value="InterPro"/>
</dbReference>
<dbReference type="GO" id="GO:0006351">
    <property type="term" value="P:DNA-templated transcription"/>
    <property type="evidence" value="ECO:0007669"/>
    <property type="project" value="UniProtKB-UniRule"/>
</dbReference>
<dbReference type="CDD" id="cd00653">
    <property type="entry name" value="RNA_pol_B_RPB2"/>
    <property type="match status" value="1"/>
</dbReference>
<dbReference type="FunFam" id="3.90.1800.10:FF:000001">
    <property type="entry name" value="DNA-directed RNA polymerase subunit beta"/>
    <property type="match status" value="1"/>
</dbReference>
<dbReference type="Gene3D" id="2.40.50.100">
    <property type="match status" value="1"/>
</dbReference>
<dbReference type="Gene3D" id="2.40.50.150">
    <property type="match status" value="1"/>
</dbReference>
<dbReference type="Gene3D" id="3.90.1100.10">
    <property type="match status" value="3"/>
</dbReference>
<dbReference type="Gene3D" id="2.40.270.10">
    <property type="entry name" value="DNA-directed RNA polymerase, subunit 2, domain 6"/>
    <property type="match status" value="1"/>
</dbReference>
<dbReference type="Gene3D" id="3.90.1800.10">
    <property type="entry name" value="RNA polymerase alpha subunit dimerisation domain"/>
    <property type="match status" value="1"/>
</dbReference>
<dbReference type="Gene3D" id="3.90.1110.10">
    <property type="entry name" value="RNA polymerase Rpb2, domain 2"/>
    <property type="match status" value="1"/>
</dbReference>
<dbReference type="HAMAP" id="MF_01321">
    <property type="entry name" value="RNApol_bact_RpoB"/>
    <property type="match status" value="1"/>
</dbReference>
<dbReference type="InterPro" id="IPR019462">
    <property type="entry name" value="DNA-dir_RNA_pol_bsu_external_1"/>
</dbReference>
<dbReference type="InterPro" id="IPR015712">
    <property type="entry name" value="DNA-dir_RNA_pol_su2"/>
</dbReference>
<dbReference type="InterPro" id="IPR007120">
    <property type="entry name" value="DNA-dir_RNAP_su2_dom"/>
</dbReference>
<dbReference type="InterPro" id="IPR037033">
    <property type="entry name" value="DNA-dir_RNAP_su2_hyb_sf"/>
</dbReference>
<dbReference type="InterPro" id="IPR010243">
    <property type="entry name" value="RNA_pol_bsu_bac"/>
</dbReference>
<dbReference type="InterPro" id="IPR007121">
    <property type="entry name" value="RNA_pol_bsu_CS"/>
</dbReference>
<dbReference type="InterPro" id="IPR007644">
    <property type="entry name" value="RNA_pol_bsu_protrusion"/>
</dbReference>
<dbReference type="InterPro" id="IPR007642">
    <property type="entry name" value="RNA_pol_Rpb2_2"/>
</dbReference>
<dbReference type="InterPro" id="IPR037034">
    <property type="entry name" value="RNA_pol_Rpb2_2_sf"/>
</dbReference>
<dbReference type="InterPro" id="IPR007645">
    <property type="entry name" value="RNA_pol_Rpb2_3"/>
</dbReference>
<dbReference type="InterPro" id="IPR007641">
    <property type="entry name" value="RNA_pol_Rpb2_7"/>
</dbReference>
<dbReference type="InterPro" id="IPR014724">
    <property type="entry name" value="RNA_pol_RPB2_OB-fold"/>
</dbReference>
<dbReference type="NCBIfam" id="NF001616">
    <property type="entry name" value="PRK00405.1"/>
    <property type="match status" value="1"/>
</dbReference>
<dbReference type="NCBIfam" id="TIGR02013">
    <property type="entry name" value="rpoB"/>
    <property type="match status" value="1"/>
</dbReference>
<dbReference type="PANTHER" id="PTHR20856">
    <property type="entry name" value="DNA-DIRECTED RNA POLYMERASE I SUBUNIT 2"/>
    <property type="match status" value="1"/>
</dbReference>
<dbReference type="Pfam" id="PF04563">
    <property type="entry name" value="RNA_pol_Rpb2_1"/>
    <property type="match status" value="1"/>
</dbReference>
<dbReference type="Pfam" id="PF04561">
    <property type="entry name" value="RNA_pol_Rpb2_2"/>
    <property type="match status" value="2"/>
</dbReference>
<dbReference type="Pfam" id="PF04565">
    <property type="entry name" value="RNA_pol_Rpb2_3"/>
    <property type="match status" value="1"/>
</dbReference>
<dbReference type="Pfam" id="PF10385">
    <property type="entry name" value="RNA_pol_Rpb2_45"/>
    <property type="match status" value="1"/>
</dbReference>
<dbReference type="Pfam" id="PF00562">
    <property type="entry name" value="RNA_pol_Rpb2_6"/>
    <property type="match status" value="1"/>
</dbReference>
<dbReference type="Pfam" id="PF04560">
    <property type="entry name" value="RNA_pol_Rpb2_7"/>
    <property type="match status" value="1"/>
</dbReference>
<dbReference type="SUPFAM" id="SSF64484">
    <property type="entry name" value="beta and beta-prime subunits of DNA dependent RNA-polymerase"/>
    <property type="match status" value="1"/>
</dbReference>
<dbReference type="PROSITE" id="PS01166">
    <property type="entry name" value="RNA_POL_BETA"/>
    <property type="match status" value="1"/>
</dbReference>
<comment type="function">
    <text evidence="1">DNA-dependent RNA polymerase catalyzes the transcription of DNA into RNA using the four ribonucleoside triphosphates as substrates.</text>
</comment>
<comment type="catalytic activity">
    <reaction evidence="1">
        <text>RNA(n) + a ribonucleoside 5'-triphosphate = RNA(n+1) + diphosphate</text>
        <dbReference type="Rhea" id="RHEA:21248"/>
        <dbReference type="Rhea" id="RHEA-COMP:14527"/>
        <dbReference type="Rhea" id="RHEA-COMP:17342"/>
        <dbReference type="ChEBI" id="CHEBI:33019"/>
        <dbReference type="ChEBI" id="CHEBI:61557"/>
        <dbReference type="ChEBI" id="CHEBI:140395"/>
        <dbReference type="EC" id="2.7.7.6"/>
    </reaction>
</comment>
<comment type="subunit">
    <text evidence="1">The RNAP catalytic core consists of 2 alpha, 1 beta, 1 beta' and 1 omega subunit. When a sigma factor is associated with the core the holoenzyme is formed, which can initiate transcription.</text>
</comment>
<comment type="similarity">
    <text evidence="1">Belongs to the RNA polymerase beta chain family.</text>
</comment>
<keyword id="KW-0240">DNA-directed RNA polymerase</keyword>
<keyword id="KW-0548">Nucleotidyltransferase</keyword>
<keyword id="KW-0804">Transcription</keyword>
<keyword id="KW-0808">Transferase</keyword>
<accession>Q92F22</accession>
<organism>
    <name type="scientific">Listeria innocua serovar 6a (strain ATCC BAA-680 / CLIP 11262)</name>
    <dbReference type="NCBI Taxonomy" id="272626"/>
    <lineage>
        <taxon>Bacteria</taxon>
        <taxon>Bacillati</taxon>
        <taxon>Bacillota</taxon>
        <taxon>Bacilli</taxon>
        <taxon>Bacillales</taxon>
        <taxon>Listeriaceae</taxon>
        <taxon>Listeria</taxon>
    </lineage>
</organism>
<feature type="chain" id="PRO_0000047915" description="DNA-directed RNA polymerase subunit beta">
    <location>
        <begin position="1"/>
        <end position="1184"/>
    </location>
</feature>
<feature type="region of interest" description="Disordered" evidence="2">
    <location>
        <begin position="1160"/>
        <end position="1184"/>
    </location>
</feature>
<sequence length="1184" mass="132606">MSGHSGHDVKYGRHRTRRSFARISEVLELPNLIEIQTASYQWFLDEGLREMFRDISPIEDFAGNLSLEFIDYDLGEPKYSVEESKNRDANYAAPLRVKLRLINKETGEVKDQEVFMGDFPLMTEMGTFIINGAERVIVSQLVRSPGVYFNGKLDKNGKKGFGSTVIPNRGAWLEYETDAKDVVHVRIDRTRKLPVTVLLRALGFGSDQEIIDLIGDNDYLRNTLEKDNTDNAEKALLEIYERLRPGEPPTVDNARSLLVSRFFDPKRYDLASVGRYKINKKLHLKNRLFNQTLAETLVDPETGEIIASKGDILDRRNLDQIIPNLENGVGFRTLRPTDGVMEDSVLVQSIKIYAPNDDEKEINIIGNAYIEENVKHITPSDIISSISYFFNLLHGVGDTDDIDHLGNRRLRSVGELLQNQFRIGLSRMERVVRERMSIQDMTTITPQQLINIRPVVASIKEFFGSSQLSQFMDQTNPLGELTHKRRLSALGPGGLTRERAGYEVRDVHYSHYGRMCPIETPEGPNIGLINSLSSFAKVNKFGFIETPYRRVDPETNRVTDKIDYLTADEEDNYVVAQANSKLDEQGTFTEEEVMARFRSENLAVEKERIDYMDVSPKQVVSVATACIPFLENDDSNRALMGANMQRQAVPLMHPEAPFVGTGMEHVSAKDSGAAVTAKHDGIVEHVEAREIWVRRVSLVDGKEVTGGIDKYTLRKFVRSNQGTCYNQRPNVAEGDRVVKGEILGNGPSMDSGELALGRNVLVAFMTWDGYNYEDAIIMSERLVKDDVYTSIHIEEFESEARDTKLGPEEMTRDIPNVGEDALRDLDERGIIRVGAEVKDNDLLVGKVTPKGVTELTAEERLLHAIFGEKAREVRDTSLRVPHGGGGIVLDVKIFTREAGDELPPGVNQLVRVYIVQKRKIHEGDKMAGRHGNKGVISRILPEEDMPFMPDGTPVDIMLNPLGVPSRMNIGQVLELHLGMAARALGIHVATPVFDGANEEDVWSTVEEAGMARDAKTVLYDGRSGEAFDNRISVGVMYMIKLAHMVDDKLHARSTGPYSLVTQQPLGGKAQFGGQRFGEMEVWALEAYGAAYTLQEILTIKSDDVVGRVKTYEAIVKGESVPEPGVPESFKVLIKELQSLGMDVKMLSADEEEIEMRDMDDDDFTNQNDAFNIVQPENAATEKTE</sequence>
<proteinExistence type="inferred from homology"/>
<name>RPOB_LISIN</name>
<protein>
    <recommendedName>
        <fullName evidence="1">DNA-directed RNA polymerase subunit beta</fullName>
        <shortName evidence="1">RNAP subunit beta</shortName>
        <ecNumber evidence="1">2.7.7.6</ecNumber>
    </recommendedName>
    <alternativeName>
        <fullName evidence="1">RNA polymerase subunit beta</fullName>
    </alternativeName>
    <alternativeName>
        <fullName evidence="1">Transcriptase subunit beta</fullName>
    </alternativeName>
</protein>